<sequence length="79" mass="8256">MENLNMDLLYMAAAVMMGLAAIGAAIGIGILGGKFLEGAARQPDLIPLLRTQFFIVMGLVDAIPMIAVGLGLYVMFAVA</sequence>
<dbReference type="EMBL" id="CU928161">
    <property type="protein sequence ID" value="CAR05365.1"/>
    <property type="molecule type" value="Genomic_DNA"/>
</dbReference>
<dbReference type="RefSeq" id="WP_000429386.1">
    <property type="nucleotide sequence ID" value="NC_011742.1"/>
</dbReference>
<dbReference type="SMR" id="B7MGF7"/>
<dbReference type="GeneID" id="98390858"/>
<dbReference type="KEGG" id="ecz:ECS88_4159"/>
<dbReference type="HOGENOM" id="CLU_148047_1_0_6"/>
<dbReference type="Proteomes" id="UP000000747">
    <property type="component" value="Chromosome"/>
</dbReference>
<dbReference type="GO" id="GO:0005886">
    <property type="term" value="C:plasma membrane"/>
    <property type="evidence" value="ECO:0007669"/>
    <property type="project" value="UniProtKB-SubCell"/>
</dbReference>
<dbReference type="GO" id="GO:0045259">
    <property type="term" value="C:proton-transporting ATP synthase complex"/>
    <property type="evidence" value="ECO:0007669"/>
    <property type="project" value="UniProtKB-KW"/>
</dbReference>
<dbReference type="GO" id="GO:0033177">
    <property type="term" value="C:proton-transporting two-sector ATPase complex, proton-transporting domain"/>
    <property type="evidence" value="ECO:0007669"/>
    <property type="project" value="InterPro"/>
</dbReference>
<dbReference type="GO" id="GO:0008289">
    <property type="term" value="F:lipid binding"/>
    <property type="evidence" value="ECO:0007669"/>
    <property type="project" value="UniProtKB-KW"/>
</dbReference>
<dbReference type="GO" id="GO:0046933">
    <property type="term" value="F:proton-transporting ATP synthase activity, rotational mechanism"/>
    <property type="evidence" value="ECO:0007669"/>
    <property type="project" value="UniProtKB-UniRule"/>
</dbReference>
<dbReference type="CDD" id="cd18185">
    <property type="entry name" value="ATP-synt_Fo_c_ATPE"/>
    <property type="match status" value="1"/>
</dbReference>
<dbReference type="FunFam" id="1.20.20.10:FF:000002">
    <property type="entry name" value="ATP synthase subunit c"/>
    <property type="match status" value="1"/>
</dbReference>
<dbReference type="Gene3D" id="1.20.20.10">
    <property type="entry name" value="F1F0 ATP synthase subunit C"/>
    <property type="match status" value="1"/>
</dbReference>
<dbReference type="HAMAP" id="MF_01396">
    <property type="entry name" value="ATP_synth_c_bact"/>
    <property type="match status" value="1"/>
</dbReference>
<dbReference type="InterPro" id="IPR005953">
    <property type="entry name" value="ATP_synth_csu_bac/chlpt"/>
</dbReference>
<dbReference type="InterPro" id="IPR000454">
    <property type="entry name" value="ATP_synth_F0_csu"/>
</dbReference>
<dbReference type="InterPro" id="IPR020537">
    <property type="entry name" value="ATP_synth_F0_csu_DDCD_BS"/>
</dbReference>
<dbReference type="InterPro" id="IPR038662">
    <property type="entry name" value="ATP_synth_F0_csu_sf"/>
</dbReference>
<dbReference type="InterPro" id="IPR002379">
    <property type="entry name" value="ATPase_proteolipid_c-like_dom"/>
</dbReference>
<dbReference type="InterPro" id="IPR035921">
    <property type="entry name" value="F/V-ATP_Csub_sf"/>
</dbReference>
<dbReference type="NCBIfam" id="TIGR01260">
    <property type="entry name" value="ATP_synt_c"/>
    <property type="match status" value="1"/>
</dbReference>
<dbReference type="NCBIfam" id="NF005363">
    <property type="entry name" value="PRK06876.1"/>
    <property type="match status" value="1"/>
</dbReference>
<dbReference type="Pfam" id="PF00137">
    <property type="entry name" value="ATP-synt_C"/>
    <property type="match status" value="1"/>
</dbReference>
<dbReference type="PRINTS" id="PR00124">
    <property type="entry name" value="ATPASEC"/>
</dbReference>
<dbReference type="SUPFAM" id="SSF81333">
    <property type="entry name" value="F1F0 ATP synthase subunit C"/>
    <property type="match status" value="1"/>
</dbReference>
<dbReference type="PROSITE" id="PS00605">
    <property type="entry name" value="ATPASE_C"/>
    <property type="match status" value="1"/>
</dbReference>
<gene>
    <name evidence="1" type="primary">atpE</name>
    <name type="ordered locus">ECS88_4159</name>
</gene>
<feature type="chain" id="PRO_1000184362" description="ATP synthase subunit c">
    <location>
        <begin position="1"/>
        <end position="79"/>
    </location>
</feature>
<feature type="transmembrane region" description="Helical" evidence="1">
    <location>
        <begin position="11"/>
        <end position="31"/>
    </location>
</feature>
<feature type="transmembrane region" description="Helical" evidence="1">
    <location>
        <begin position="53"/>
        <end position="73"/>
    </location>
</feature>
<feature type="site" description="Reversibly protonated during proton transport" evidence="1">
    <location>
        <position position="61"/>
    </location>
</feature>
<organism>
    <name type="scientific">Escherichia coli O45:K1 (strain S88 / ExPEC)</name>
    <dbReference type="NCBI Taxonomy" id="585035"/>
    <lineage>
        <taxon>Bacteria</taxon>
        <taxon>Pseudomonadati</taxon>
        <taxon>Pseudomonadota</taxon>
        <taxon>Gammaproteobacteria</taxon>
        <taxon>Enterobacterales</taxon>
        <taxon>Enterobacteriaceae</taxon>
        <taxon>Escherichia</taxon>
    </lineage>
</organism>
<name>ATPL_ECO45</name>
<comment type="function">
    <text evidence="1">F(1)F(0) ATP synthase produces ATP from ADP in the presence of a proton or sodium gradient. F-type ATPases consist of two structural domains, F(1) containing the extramembraneous catalytic core and F(0) containing the membrane proton channel, linked together by a central stalk and a peripheral stalk. During catalysis, ATP synthesis in the catalytic domain of F(1) is coupled via a rotary mechanism of the central stalk subunits to proton translocation.</text>
</comment>
<comment type="function">
    <text evidence="1">Key component of the F(0) channel; it plays a direct role in translocation across the membrane. A homomeric c-ring of between 10-14 subunits forms the central stalk rotor element with the F(1) delta and epsilon subunits.</text>
</comment>
<comment type="subunit">
    <text evidence="1">F-type ATPases have 2 components, F(1) - the catalytic core - and F(0) - the membrane proton channel. F(1) has five subunits: alpha(3), beta(3), gamma(1), delta(1), epsilon(1). F(0) has three main subunits: a(1), b(2) and c(10-14). The alpha and beta chains form an alternating ring which encloses part of the gamma chain. F(1) is attached to F(0) by a central stalk formed by the gamma and epsilon chains, while a peripheral stalk is formed by the delta and b chains.</text>
</comment>
<comment type="subcellular location">
    <subcellularLocation>
        <location evidence="1">Cell inner membrane</location>
        <topology evidence="1">Multi-pass membrane protein</topology>
    </subcellularLocation>
</comment>
<comment type="similarity">
    <text evidence="1">Belongs to the ATPase C chain family.</text>
</comment>
<protein>
    <recommendedName>
        <fullName evidence="1">ATP synthase subunit c</fullName>
    </recommendedName>
    <alternativeName>
        <fullName evidence="1">ATP synthase F(0) sector subunit c</fullName>
    </alternativeName>
    <alternativeName>
        <fullName evidence="1">F-type ATPase subunit c</fullName>
        <shortName evidence="1">F-ATPase subunit c</shortName>
    </alternativeName>
    <alternativeName>
        <fullName evidence="1">Lipid-binding protein</fullName>
    </alternativeName>
</protein>
<reference key="1">
    <citation type="journal article" date="2009" name="PLoS Genet.">
        <title>Organised genome dynamics in the Escherichia coli species results in highly diverse adaptive paths.</title>
        <authorList>
            <person name="Touchon M."/>
            <person name="Hoede C."/>
            <person name="Tenaillon O."/>
            <person name="Barbe V."/>
            <person name="Baeriswyl S."/>
            <person name="Bidet P."/>
            <person name="Bingen E."/>
            <person name="Bonacorsi S."/>
            <person name="Bouchier C."/>
            <person name="Bouvet O."/>
            <person name="Calteau A."/>
            <person name="Chiapello H."/>
            <person name="Clermont O."/>
            <person name="Cruveiller S."/>
            <person name="Danchin A."/>
            <person name="Diard M."/>
            <person name="Dossat C."/>
            <person name="Karoui M.E."/>
            <person name="Frapy E."/>
            <person name="Garry L."/>
            <person name="Ghigo J.M."/>
            <person name="Gilles A.M."/>
            <person name="Johnson J."/>
            <person name="Le Bouguenec C."/>
            <person name="Lescat M."/>
            <person name="Mangenot S."/>
            <person name="Martinez-Jehanne V."/>
            <person name="Matic I."/>
            <person name="Nassif X."/>
            <person name="Oztas S."/>
            <person name="Petit M.A."/>
            <person name="Pichon C."/>
            <person name="Rouy Z."/>
            <person name="Ruf C.S."/>
            <person name="Schneider D."/>
            <person name="Tourret J."/>
            <person name="Vacherie B."/>
            <person name="Vallenet D."/>
            <person name="Medigue C."/>
            <person name="Rocha E.P.C."/>
            <person name="Denamur E."/>
        </authorList>
    </citation>
    <scope>NUCLEOTIDE SEQUENCE [LARGE SCALE GENOMIC DNA]</scope>
    <source>
        <strain>S88 / ExPEC</strain>
    </source>
</reference>
<accession>B7MGF7</accession>
<keyword id="KW-0066">ATP synthesis</keyword>
<keyword id="KW-0997">Cell inner membrane</keyword>
<keyword id="KW-1003">Cell membrane</keyword>
<keyword id="KW-0138">CF(0)</keyword>
<keyword id="KW-0375">Hydrogen ion transport</keyword>
<keyword id="KW-0406">Ion transport</keyword>
<keyword id="KW-0446">Lipid-binding</keyword>
<keyword id="KW-0472">Membrane</keyword>
<keyword id="KW-1185">Reference proteome</keyword>
<keyword id="KW-0812">Transmembrane</keyword>
<keyword id="KW-1133">Transmembrane helix</keyword>
<keyword id="KW-0813">Transport</keyword>
<evidence type="ECO:0000255" key="1">
    <source>
        <dbReference type="HAMAP-Rule" id="MF_01396"/>
    </source>
</evidence>
<proteinExistence type="inferred from homology"/>